<protein>
    <recommendedName>
        <fullName evidence="1">tRNA pseudouridine synthase A</fullName>
        <ecNumber evidence="1">5.4.99.12</ecNumber>
    </recommendedName>
    <alternativeName>
        <fullName evidence="1">tRNA pseudouridine(38-40) synthase</fullName>
    </alternativeName>
    <alternativeName>
        <fullName evidence="1">tRNA pseudouridylate synthase I</fullName>
    </alternativeName>
    <alternativeName>
        <fullName evidence="1">tRNA-uridine isomerase I</fullName>
    </alternativeName>
</protein>
<name>TRUA_XANP2</name>
<keyword id="KW-0413">Isomerase</keyword>
<keyword id="KW-1185">Reference proteome</keyword>
<keyword id="KW-0819">tRNA processing</keyword>
<sequence length="245" mass="27209">MPRYKLTIEYDGTPYAGWQIQADQQTVQGALAQAFKRFCGEDVHVAGAGRTDAGVHATGQVAHVDLSRHWRSDTVRDAMTAQLRPHPIAVLSAEEVPDSFDARFSATKRHYLYRIINRRPDLALDRDRAWRIPQKLDAQAMHEAAQRLLGKHDFSTFRAAECQAASPLKTLDQLDVSRSGDEIRVITSARSFLHHQVRSMVGSLMRVGEGRWSADDLEAALKAADRTRCGPMAPAAGLYLAAVSY</sequence>
<dbReference type="EC" id="5.4.99.12" evidence="1"/>
<dbReference type="EMBL" id="CP000781">
    <property type="protein sequence ID" value="ABS68532.1"/>
    <property type="molecule type" value="Genomic_DNA"/>
</dbReference>
<dbReference type="SMR" id="A7IKI9"/>
<dbReference type="STRING" id="78245.Xaut_3303"/>
<dbReference type="KEGG" id="xau:Xaut_3303"/>
<dbReference type="eggNOG" id="COG0101">
    <property type="taxonomic scope" value="Bacteria"/>
</dbReference>
<dbReference type="HOGENOM" id="CLU_014673_0_2_5"/>
<dbReference type="OrthoDB" id="9811823at2"/>
<dbReference type="PhylomeDB" id="A7IKI9"/>
<dbReference type="Proteomes" id="UP000002417">
    <property type="component" value="Chromosome"/>
</dbReference>
<dbReference type="GO" id="GO:0003723">
    <property type="term" value="F:RNA binding"/>
    <property type="evidence" value="ECO:0007669"/>
    <property type="project" value="InterPro"/>
</dbReference>
<dbReference type="GO" id="GO:0160147">
    <property type="term" value="F:tRNA pseudouridine(38-40) synthase activity"/>
    <property type="evidence" value="ECO:0007669"/>
    <property type="project" value="UniProtKB-EC"/>
</dbReference>
<dbReference type="GO" id="GO:0031119">
    <property type="term" value="P:tRNA pseudouridine synthesis"/>
    <property type="evidence" value="ECO:0007669"/>
    <property type="project" value="UniProtKB-UniRule"/>
</dbReference>
<dbReference type="CDD" id="cd02570">
    <property type="entry name" value="PseudoU_synth_EcTruA"/>
    <property type="match status" value="1"/>
</dbReference>
<dbReference type="FunFam" id="3.30.70.580:FF:000001">
    <property type="entry name" value="tRNA pseudouridine synthase A"/>
    <property type="match status" value="1"/>
</dbReference>
<dbReference type="Gene3D" id="3.30.70.660">
    <property type="entry name" value="Pseudouridine synthase I, catalytic domain, C-terminal subdomain"/>
    <property type="match status" value="1"/>
</dbReference>
<dbReference type="Gene3D" id="3.30.70.580">
    <property type="entry name" value="Pseudouridine synthase I, catalytic domain, N-terminal subdomain"/>
    <property type="match status" value="1"/>
</dbReference>
<dbReference type="HAMAP" id="MF_00171">
    <property type="entry name" value="TruA"/>
    <property type="match status" value="1"/>
</dbReference>
<dbReference type="InterPro" id="IPR020103">
    <property type="entry name" value="PsdUridine_synth_cat_dom_sf"/>
</dbReference>
<dbReference type="InterPro" id="IPR001406">
    <property type="entry name" value="PsdUridine_synth_TruA"/>
</dbReference>
<dbReference type="InterPro" id="IPR020097">
    <property type="entry name" value="PsdUridine_synth_TruA_a/b_dom"/>
</dbReference>
<dbReference type="InterPro" id="IPR020095">
    <property type="entry name" value="PsdUridine_synth_TruA_C"/>
</dbReference>
<dbReference type="InterPro" id="IPR020094">
    <property type="entry name" value="TruA/RsuA/RluB/E/F_N"/>
</dbReference>
<dbReference type="NCBIfam" id="TIGR00071">
    <property type="entry name" value="hisT_truA"/>
    <property type="match status" value="1"/>
</dbReference>
<dbReference type="PANTHER" id="PTHR11142">
    <property type="entry name" value="PSEUDOURIDYLATE SYNTHASE"/>
    <property type="match status" value="1"/>
</dbReference>
<dbReference type="PANTHER" id="PTHR11142:SF0">
    <property type="entry name" value="TRNA PSEUDOURIDINE SYNTHASE-LIKE 1"/>
    <property type="match status" value="1"/>
</dbReference>
<dbReference type="Pfam" id="PF01416">
    <property type="entry name" value="PseudoU_synth_1"/>
    <property type="match status" value="2"/>
</dbReference>
<dbReference type="PIRSF" id="PIRSF001430">
    <property type="entry name" value="tRNA_psdUrid_synth"/>
    <property type="match status" value="1"/>
</dbReference>
<dbReference type="SUPFAM" id="SSF55120">
    <property type="entry name" value="Pseudouridine synthase"/>
    <property type="match status" value="1"/>
</dbReference>
<comment type="function">
    <text evidence="1">Formation of pseudouridine at positions 38, 39 and 40 in the anticodon stem and loop of transfer RNAs.</text>
</comment>
<comment type="catalytic activity">
    <reaction evidence="1">
        <text>uridine(38/39/40) in tRNA = pseudouridine(38/39/40) in tRNA</text>
        <dbReference type="Rhea" id="RHEA:22376"/>
        <dbReference type="Rhea" id="RHEA-COMP:10085"/>
        <dbReference type="Rhea" id="RHEA-COMP:10087"/>
        <dbReference type="ChEBI" id="CHEBI:65314"/>
        <dbReference type="ChEBI" id="CHEBI:65315"/>
        <dbReference type="EC" id="5.4.99.12"/>
    </reaction>
</comment>
<comment type="subunit">
    <text evidence="1">Homodimer.</text>
</comment>
<comment type="similarity">
    <text evidence="1">Belongs to the tRNA pseudouridine synthase TruA family.</text>
</comment>
<organism>
    <name type="scientific">Xanthobacter autotrophicus (strain ATCC BAA-1158 / Py2)</name>
    <dbReference type="NCBI Taxonomy" id="78245"/>
    <lineage>
        <taxon>Bacteria</taxon>
        <taxon>Pseudomonadati</taxon>
        <taxon>Pseudomonadota</taxon>
        <taxon>Alphaproteobacteria</taxon>
        <taxon>Hyphomicrobiales</taxon>
        <taxon>Xanthobacteraceae</taxon>
        <taxon>Xanthobacter</taxon>
    </lineage>
</organism>
<accession>A7IKI9</accession>
<feature type="chain" id="PRO_1000097808" description="tRNA pseudouridine synthase A">
    <location>
        <begin position="1"/>
        <end position="245"/>
    </location>
</feature>
<feature type="active site" description="Nucleophile" evidence="1">
    <location>
        <position position="52"/>
    </location>
</feature>
<feature type="binding site" evidence="1">
    <location>
        <position position="111"/>
    </location>
    <ligand>
        <name>substrate</name>
    </ligand>
</feature>
<proteinExistence type="inferred from homology"/>
<evidence type="ECO:0000255" key="1">
    <source>
        <dbReference type="HAMAP-Rule" id="MF_00171"/>
    </source>
</evidence>
<reference key="1">
    <citation type="submission" date="2007-07" db="EMBL/GenBank/DDBJ databases">
        <title>Complete sequence of chromosome of Xanthobacter autotrophicus Py2.</title>
        <authorList>
            <consortium name="US DOE Joint Genome Institute"/>
            <person name="Copeland A."/>
            <person name="Lucas S."/>
            <person name="Lapidus A."/>
            <person name="Barry K."/>
            <person name="Glavina del Rio T."/>
            <person name="Hammon N."/>
            <person name="Israni S."/>
            <person name="Dalin E."/>
            <person name="Tice H."/>
            <person name="Pitluck S."/>
            <person name="Sims D."/>
            <person name="Brettin T."/>
            <person name="Bruce D."/>
            <person name="Detter J.C."/>
            <person name="Han C."/>
            <person name="Tapia R."/>
            <person name="Brainard J."/>
            <person name="Schmutz J."/>
            <person name="Larimer F."/>
            <person name="Land M."/>
            <person name="Hauser L."/>
            <person name="Kyrpides N."/>
            <person name="Kim E."/>
            <person name="Ensigns S.A."/>
            <person name="Richardson P."/>
        </authorList>
    </citation>
    <scope>NUCLEOTIDE SEQUENCE [LARGE SCALE GENOMIC DNA]</scope>
    <source>
        <strain>ATCC BAA-1158 / Py2</strain>
    </source>
</reference>
<gene>
    <name evidence="1" type="primary">truA</name>
    <name type="ordered locus">Xaut_3303</name>
</gene>